<dbReference type="EMBL" id="AAFI02000012">
    <property type="protein sequence ID" value="EAL69976.1"/>
    <property type="molecule type" value="Genomic_DNA"/>
</dbReference>
<dbReference type="RefSeq" id="XP_644297.1">
    <property type="nucleotide sequence ID" value="XM_639205.1"/>
</dbReference>
<dbReference type="SMR" id="Q86KD1"/>
<dbReference type="FunCoup" id="Q86KD1">
    <property type="interactions" value="862"/>
</dbReference>
<dbReference type="STRING" id="44689.Q86KD1"/>
<dbReference type="PaxDb" id="44689-DDB0234116"/>
<dbReference type="EnsemblProtists" id="EAL69976">
    <property type="protein sequence ID" value="EAL69976"/>
    <property type="gene ID" value="DDB_G0274167"/>
</dbReference>
<dbReference type="GeneID" id="8619725"/>
<dbReference type="KEGG" id="ddi:DDB_G0274167"/>
<dbReference type="dictyBase" id="DDB_G0274167">
    <property type="gene designation" value="cand1"/>
</dbReference>
<dbReference type="VEuPathDB" id="AmoebaDB:DDB_G0274167"/>
<dbReference type="eggNOG" id="KOG1824">
    <property type="taxonomic scope" value="Eukaryota"/>
</dbReference>
<dbReference type="HOGENOM" id="CLU_007157_0_0_1"/>
<dbReference type="InParanoid" id="Q86KD1"/>
<dbReference type="OMA" id="AYIPHFQ"/>
<dbReference type="PhylomeDB" id="Q86KD1"/>
<dbReference type="Reactome" id="R-DDI-6798695">
    <property type="pathway name" value="Neutrophil degranulation"/>
</dbReference>
<dbReference type="Reactome" id="R-DDI-8951664">
    <property type="pathway name" value="Neddylation"/>
</dbReference>
<dbReference type="Reactome" id="R-DDI-917937">
    <property type="pathway name" value="Iron uptake and transport"/>
</dbReference>
<dbReference type="PRO" id="PR:Q86KD1"/>
<dbReference type="Proteomes" id="UP000002195">
    <property type="component" value="Chromosome 2"/>
</dbReference>
<dbReference type="GO" id="GO:0005634">
    <property type="term" value="C:nucleus"/>
    <property type="evidence" value="ECO:0000318"/>
    <property type="project" value="GO_Central"/>
</dbReference>
<dbReference type="GO" id="GO:0000151">
    <property type="term" value="C:ubiquitin ligase complex"/>
    <property type="evidence" value="ECO:0000250"/>
    <property type="project" value="dictyBase"/>
</dbReference>
<dbReference type="GO" id="GO:0016567">
    <property type="term" value="P:protein ubiquitination"/>
    <property type="evidence" value="ECO:0000250"/>
    <property type="project" value="dictyBase"/>
</dbReference>
<dbReference type="GO" id="GO:0010265">
    <property type="term" value="P:SCF complex assembly"/>
    <property type="evidence" value="ECO:0000318"/>
    <property type="project" value="GO_Central"/>
</dbReference>
<dbReference type="FunFam" id="1.25.10.10:FF:000242">
    <property type="entry name" value="Cullin-associated NEDD8-dissociated protein 1"/>
    <property type="match status" value="1"/>
</dbReference>
<dbReference type="Gene3D" id="1.25.10.10">
    <property type="entry name" value="Leucine-rich Repeat Variant"/>
    <property type="match status" value="1"/>
</dbReference>
<dbReference type="InterPro" id="IPR011989">
    <property type="entry name" value="ARM-like"/>
</dbReference>
<dbReference type="InterPro" id="IPR016024">
    <property type="entry name" value="ARM-type_fold"/>
</dbReference>
<dbReference type="InterPro" id="IPR039852">
    <property type="entry name" value="CAND1/CAND2"/>
</dbReference>
<dbReference type="InterPro" id="IPR013932">
    <property type="entry name" value="TATA-bd_TIP120"/>
</dbReference>
<dbReference type="InterPro" id="IPR034085">
    <property type="entry name" value="TOG"/>
</dbReference>
<dbReference type="PANTHER" id="PTHR12696">
    <property type="entry name" value="TIP120"/>
    <property type="match status" value="1"/>
</dbReference>
<dbReference type="Pfam" id="PF08623">
    <property type="entry name" value="TIP120"/>
    <property type="match status" value="1"/>
</dbReference>
<dbReference type="SMART" id="SM01349">
    <property type="entry name" value="TOG"/>
    <property type="match status" value="1"/>
</dbReference>
<dbReference type="SUPFAM" id="SSF48371">
    <property type="entry name" value="ARM repeat"/>
    <property type="match status" value="1"/>
</dbReference>
<feature type="chain" id="PRO_0000327914" description="Cullin-associated NEDD8-dissociated protein 1">
    <location>
        <begin position="1"/>
        <end position="1238"/>
    </location>
</feature>
<feature type="repeat" description="HEAT 1">
    <location>
        <begin position="41"/>
        <end position="78"/>
    </location>
</feature>
<feature type="repeat" description="HEAT 2">
    <location>
        <begin position="126"/>
        <end position="167"/>
    </location>
</feature>
<feature type="repeat" description="HEAT 3">
    <location>
        <begin position="171"/>
        <end position="208"/>
    </location>
</feature>
<feature type="repeat" description="HEAT 4">
    <location>
        <begin position="210"/>
        <end position="247"/>
    </location>
</feature>
<feature type="repeat" description="HEAT 5">
    <location>
        <begin position="251"/>
        <end position="292"/>
    </location>
</feature>
<feature type="repeat" description="HEAT 6">
    <location>
        <begin position="382"/>
        <end position="419"/>
    </location>
</feature>
<feature type="repeat" description="HEAT 7">
    <location>
        <begin position="432"/>
        <end position="469"/>
    </location>
</feature>
<feature type="repeat" description="HEAT 8">
    <location>
        <begin position="603"/>
        <end position="641"/>
    </location>
</feature>
<feature type="repeat" description="HEAT 9">
    <location>
        <begin position="646"/>
        <end position="683"/>
    </location>
</feature>
<feature type="repeat" description="HEAT 10">
    <location>
        <begin position="688"/>
        <end position="725"/>
    </location>
</feature>
<feature type="repeat" description="HEAT 11">
    <location>
        <begin position="853"/>
        <end position="890"/>
    </location>
</feature>
<feature type="repeat" description="HEAT 12">
    <location>
        <begin position="933"/>
        <end position="966"/>
    </location>
</feature>
<feature type="repeat" description="HEAT 13">
    <location>
        <begin position="967"/>
        <end position="1004"/>
    </location>
</feature>
<feature type="repeat" description="HEAT 14">
    <location>
        <begin position="1008"/>
        <end position="1045"/>
    </location>
</feature>
<feature type="region of interest" description="Disordered" evidence="2">
    <location>
        <begin position="315"/>
        <end position="354"/>
    </location>
</feature>
<gene>
    <name type="primary">cand1</name>
    <name type="ORF">DDB_G0274167</name>
</gene>
<comment type="function">
    <text evidence="1">Key assembly factor of SCF (SKP1-CUL1-F-box protein) E3 ubiquitin ligase complexes that promotes the exchange of the substrate-recognition F-box subunit in SCF complexes, thereby playing a key role in the cellular repertoire of SCF complexes. Acts as a F-box protein exchange factor (By similarity).</text>
</comment>
<comment type="subcellular location">
    <subcellularLocation>
        <location evidence="1">Nucleus</location>
    </subcellularLocation>
</comment>
<comment type="similarity">
    <text evidence="3">Belongs to the CAND family.</text>
</comment>
<sequence>MSFFLGQILEKMGSIDKDIRFMATHDLANELEKDTFKMDPTYENKIVTKLLALTADSANNVQENVVKCLGLLIKRVKDSQATEIIDTLSKNILEESNKEELVEISGIGLKTIITNLPSEGSSISTLVIKNLVPKLLIGIDSEKLKDKNEIKMSCLDILNDLLQKYGSFMIGDLENIQKVVLPKLNATRPAIRKRAILCLANIAFPSPDNLFNSLLDYIIKSIEEAKKPDHISTLIQAIGAICKSSGYRLGKYLPKVMPHVLNYCDNNKFEQNDELRENCLLCFEAIIEKCQKDVTPYIGEIITLCTKYIKFDPNYSDDGEGEEDGDEEEEEMETSGDNDEEQEEEEEEEDLSDDDDISWKIRRSSCKTLCAIISTRPELLVELYQKVAPVLYNRFKEREENVRLDIFTTFVLLLKQLNKKLANPQAKEVLKQQVPKLVQSISKSLIDKSIRTRVGAIALLKELVMIIPGSLTGQVSQIVNGINLSLSEKNTNSNLKIEALVLLKLLLINEPAQSFQSHITSLSTHIVKCINDSYYRIASEALRVCQEFVIVFNKIRSSTDCKPIISNLFAANFVQLKAQDIDQEVKEAAISSIGTIITLFGNEIQSELQPCLSILLERLDNELTRVVTVKVLSRIINSSINIDLSSILPSAIKLLSTFLRKNNRVLKQSSLIALNDIVKVCPNLLPSSLLTGILTEMATLINESDLQITHLAFVFIQNLLKNYSEKHQAATLVNEKCIPPTLALLKSSLLQGVALESLLSLFATIVQLDEPGMKYEQLLTLLFNTAADIKQPVTRQSFHSISQCIAVITVNTTPALRKQTIHNLICNLSSVNEPLVLLSLSCLGEIGRRIDIHENENLQESVYKTFEANNEEIKQVAALCLGDIAVCSLQSYLPFILEQIKNQPKKQYLLLHTLRETIVKLSHTDEGIKTIHPFLQSILPLLFDNCVNEEEGTRNIVAECLGKLSMIEPNEIIPKLVEKIKSPSPLERSTIVTSIKFSIMENKEVVDQYLAPNISQFLSLLHDGDLIVRRSALLSLNYIAHNKPNLIRNDLSVYLPILYNNAKIKPELIREVDLGPFKHKVDDGIEIRKTAFECMYTLLDTSIDKIDVAPFIVSLCDGLKDTQYDIKLLCHLMIIRLANSNGAALLENITLLLEPLRVILMTKVNETAVKQQIERNEECIRSALRAVASISRIPNSDSIVKFEEFVKNTIRTTPLAAQFNSILSEDTMSNQDSMDTSN</sequence>
<organism>
    <name type="scientific">Dictyostelium discoideum</name>
    <name type="common">Social amoeba</name>
    <dbReference type="NCBI Taxonomy" id="44689"/>
    <lineage>
        <taxon>Eukaryota</taxon>
        <taxon>Amoebozoa</taxon>
        <taxon>Evosea</taxon>
        <taxon>Eumycetozoa</taxon>
        <taxon>Dictyostelia</taxon>
        <taxon>Dictyosteliales</taxon>
        <taxon>Dictyosteliaceae</taxon>
        <taxon>Dictyostelium</taxon>
    </lineage>
</organism>
<proteinExistence type="inferred from homology"/>
<reference key="1">
    <citation type="journal article" date="2002" name="Nature">
        <title>Sequence and analysis of chromosome 2 of Dictyostelium discoideum.</title>
        <authorList>
            <person name="Gloeckner G."/>
            <person name="Eichinger L."/>
            <person name="Szafranski K."/>
            <person name="Pachebat J.A."/>
            <person name="Bankier A.T."/>
            <person name="Dear P.H."/>
            <person name="Lehmann R."/>
            <person name="Baumgart C."/>
            <person name="Parra G."/>
            <person name="Abril J.F."/>
            <person name="Guigo R."/>
            <person name="Kumpf K."/>
            <person name="Tunggal B."/>
            <person name="Cox E.C."/>
            <person name="Quail M.A."/>
            <person name="Platzer M."/>
            <person name="Rosenthal A."/>
            <person name="Noegel A.A."/>
        </authorList>
    </citation>
    <scope>NUCLEOTIDE SEQUENCE [LARGE SCALE GENOMIC DNA]</scope>
    <source>
        <strain>AX4</strain>
    </source>
</reference>
<reference key="2">
    <citation type="journal article" date="2005" name="Nature">
        <title>The genome of the social amoeba Dictyostelium discoideum.</title>
        <authorList>
            <person name="Eichinger L."/>
            <person name="Pachebat J.A."/>
            <person name="Gloeckner G."/>
            <person name="Rajandream M.A."/>
            <person name="Sucgang R."/>
            <person name="Berriman M."/>
            <person name="Song J."/>
            <person name="Olsen R."/>
            <person name="Szafranski K."/>
            <person name="Xu Q."/>
            <person name="Tunggal B."/>
            <person name="Kummerfeld S."/>
            <person name="Madera M."/>
            <person name="Konfortov B.A."/>
            <person name="Rivero F."/>
            <person name="Bankier A.T."/>
            <person name="Lehmann R."/>
            <person name="Hamlin N."/>
            <person name="Davies R."/>
            <person name="Gaudet P."/>
            <person name="Fey P."/>
            <person name="Pilcher K."/>
            <person name="Chen G."/>
            <person name="Saunders D."/>
            <person name="Sodergren E.J."/>
            <person name="Davis P."/>
            <person name="Kerhornou A."/>
            <person name="Nie X."/>
            <person name="Hall N."/>
            <person name="Anjard C."/>
            <person name="Hemphill L."/>
            <person name="Bason N."/>
            <person name="Farbrother P."/>
            <person name="Desany B."/>
            <person name="Just E."/>
            <person name="Morio T."/>
            <person name="Rost R."/>
            <person name="Churcher C.M."/>
            <person name="Cooper J."/>
            <person name="Haydock S."/>
            <person name="van Driessche N."/>
            <person name="Cronin A."/>
            <person name="Goodhead I."/>
            <person name="Muzny D.M."/>
            <person name="Mourier T."/>
            <person name="Pain A."/>
            <person name="Lu M."/>
            <person name="Harper D."/>
            <person name="Lindsay R."/>
            <person name="Hauser H."/>
            <person name="James K.D."/>
            <person name="Quiles M."/>
            <person name="Madan Babu M."/>
            <person name="Saito T."/>
            <person name="Buchrieser C."/>
            <person name="Wardroper A."/>
            <person name="Felder M."/>
            <person name="Thangavelu M."/>
            <person name="Johnson D."/>
            <person name="Knights A."/>
            <person name="Loulseged H."/>
            <person name="Mungall K.L."/>
            <person name="Oliver K."/>
            <person name="Price C."/>
            <person name="Quail M.A."/>
            <person name="Urushihara H."/>
            <person name="Hernandez J."/>
            <person name="Rabbinowitsch E."/>
            <person name="Steffen D."/>
            <person name="Sanders M."/>
            <person name="Ma J."/>
            <person name="Kohara Y."/>
            <person name="Sharp S."/>
            <person name="Simmonds M.N."/>
            <person name="Spiegler S."/>
            <person name="Tivey A."/>
            <person name="Sugano S."/>
            <person name="White B."/>
            <person name="Walker D."/>
            <person name="Woodward J.R."/>
            <person name="Winckler T."/>
            <person name="Tanaka Y."/>
            <person name="Shaulsky G."/>
            <person name="Schleicher M."/>
            <person name="Weinstock G.M."/>
            <person name="Rosenthal A."/>
            <person name="Cox E.C."/>
            <person name="Chisholm R.L."/>
            <person name="Gibbs R.A."/>
            <person name="Loomis W.F."/>
            <person name="Platzer M."/>
            <person name="Kay R.R."/>
            <person name="Williams J.G."/>
            <person name="Dear P.H."/>
            <person name="Noegel A.A."/>
            <person name="Barrell B.G."/>
            <person name="Kuspa A."/>
        </authorList>
    </citation>
    <scope>NUCLEOTIDE SEQUENCE [LARGE SCALE GENOMIC DNA]</scope>
    <source>
        <strain>AX4</strain>
    </source>
</reference>
<protein>
    <recommendedName>
        <fullName>Cullin-associated NEDD8-dissociated protein 1</fullName>
    </recommendedName>
    <alternativeName>
        <fullName>Cullin-associated and neddylation-dissociated protein 1</fullName>
    </alternativeName>
</protein>
<accession>Q86KD1</accession>
<accession>Q554M6</accession>
<name>CAND1_DICDI</name>
<evidence type="ECO:0000250" key="1"/>
<evidence type="ECO:0000256" key="2">
    <source>
        <dbReference type="SAM" id="MobiDB-lite"/>
    </source>
</evidence>
<evidence type="ECO:0000305" key="3"/>
<keyword id="KW-0539">Nucleus</keyword>
<keyword id="KW-1185">Reference proteome</keyword>
<keyword id="KW-0677">Repeat</keyword>
<keyword id="KW-0833">Ubl conjugation pathway</keyword>